<protein>
    <recommendedName>
        <fullName>Cytochrome c oxidase subunit 8A, mitochondrial</fullName>
    </recommendedName>
    <alternativeName>
        <fullName>Cytochrome c oxidase polypeptide VIII-liver</fullName>
    </alternativeName>
    <alternativeName>
        <fullName>Cytochrome c oxidase subunit 8-2</fullName>
    </alternativeName>
</protein>
<proteinExistence type="evidence at protein level"/>
<feature type="transit peptide" description="Mitochondrion" evidence="3">
    <location>
        <begin position="1"/>
        <end position="25"/>
    </location>
</feature>
<feature type="chain" id="PRO_0000150129" description="Cytochrome c oxidase subunit 8A, mitochondrial">
    <location>
        <begin position="26"/>
        <end position="69"/>
    </location>
</feature>
<feature type="topological domain" description="Mitochondrial matrix" evidence="2">
    <location>
        <begin position="26"/>
        <end position="36"/>
    </location>
</feature>
<feature type="transmembrane region" description="Helical" evidence="1">
    <location>
        <begin position="37"/>
        <end position="60"/>
    </location>
</feature>
<feature type="topological domain" description="Mitochondrial intermembrane" evidence="2">
    <location>
        <begin position="61"/>
        <end position="69"/>
    </location>
</feature>
<feature type="short sequence motif" description="SIFI-degron" evidence="2">
    <location>
        <begin position="2"/>
        <end position="19"/>
    </location>
</feature>
<feature type="sequence conflict" description="In Ref. 3; AAA41018/CAA29505." evidence="4" ref="3">
    <original>L</original>
    <variation>G</variation>
    <location>
        <position position="35"/>
    </location>
</feature>
<name>COX8A_RAT</name>
<gene>
    <name type="primary">Cox8a</name>
    <name type="synonym">Cox8</name>
    <name type="synonym">Cox8l</name>
</gene>
<organism>
    <name type="scientific">Rattus norvegicus</name>
    <name type="common">Rat</name>
    <dbReference type="NCBI Taxonomy" id="10116"/>
    <lineage>
        <taxon>Eukaryota</taxon>
        <taxon>Metazoa</taxon>
        <taxon>Chordata</taxon>
        <taxon>Craniata</taxon>
        <taxon>Vertebrata</taxon>
        <taxon>Euteleostomi</taxon>
        <taxon>Mammalia</taxon>
        <taxon>Eutheria</taxon>
        <taxon>Euarchontoglires</taxon>
        <taxon>Glires</taxon>
        <taxon>Rodentia</taxon>
        <taxon>Myomorpha</taxon>
        <taxon>Muroidea</taxon>
        <taxon>Muridae</taxon>
        <taxon>Murinae</taxon>
        <taxon>Rattus</taxon>
    </lineage>
</organism>
<evidence type="ECO:0000250" key="1">
    <source>
        <dbReference type="UniProtKB" id="P10175"/>
    </source>
</evidence>
<evidence type="ECO:0000250" key="2">
    <source>
        <dbReference type="UniProtKB" id="P10176"/>
    </source>
</evidence>
<evidence type="ECO:0000269" key="3">
    <source>
    </source>
</evidence>
<evidence type="ECO:0000305" key="4"/>
<accession>P80433</accession>
<accession>A0JMZ9</accession>
<keyword id="KW-0903">Direct protein sequencing</keyword>
<keyword id="KW-0472">Membrane</keyword>
<keyword id="KW-0496">Mitochondrion</keyword>
<keyword id="KW-0999">Mitochondrion inner membrane</keyword>
<keyword id="KW-1185">Reference proteome</keyword>
<keyword id="KW-0809">Transit peptide</keyword>
<keyword id="KW-0812">Transmembrane</keyword>
<keyword id="KW-1133">Transmembrane helix</keyword>
<keyword id="KW-0832">Ubl conjugation</keyword>
<reference key="1">
    <citation type="journal article" date="2004" name="Genome Res.">
        <title>The status, quality, and expansion of the NIH full-length cDNA project: the Mammalian Gene Collection (MGC).</title>
        <authorList>
            <consortium name="The MGC Project Team"/>
        </authorList>
    </citation>
    <scope>NUCLEOTIDE SEQUENCE [LARGE SCALE MRNA]</scope>
    <source>
        <tissue>Thymus</tissue>
    </source>
</reference>
<reference key="2">
    <citation type="journal article" date="1995" name="Eur. J. Biochem.">
        <title>Cytochrome-c oxidase in developing rat heart. Enzymic properties and amino-terminal sequences suggest identity of the fetal heart and the adult liver isoform.</title>
        <authorList>
            <person name="Schaegger H."/>
            <person name="Noack H."/>
            <person name="Halangk W."/>
            <person name="Brandt U."/>
            <person name="von Jagow G."/>
        </authorList>
    </citation>
    <scope>PROTEIN SEQUENCE OF 26-39</scope>
    <source>
        <strain>Wistar</strain>
        <tissue>Heart</tissue>
        <tissue>Liver</tissue>
    </source>
</reference>
<reference key="3">
    <citation type="journal article" date="1987" name="Eur. J. Biochem.">
        <title>Molecular cloning and further characterization of cDNAs for rat nuclear-encoded cytochrome c oxidase subunits VIc and VIII.</title>
        <authorList>
            <person name="Suske G."/>
            <person name="Mengel T."/>
            <person name="Cordingley M."/>
            <person name="Kadenbach B."/>
        </authorList>
    </citation>
    <scope>NUCLEOTIDE SEQUENCE [MRNA] OF 35-69</scope>
    <source>
        <tissue>Hepatoma</tissue>
    </source>
</reference>
<sequence>MSSLTPLLLRSLTGPARRLMVPRAQVHSKPPREQLGVLDITIGLTSCFVCCLLPAGWVLSHLESYKKRE</sequence>
<dbReference type="EMBL" id="BC126066">
    <property type="protein sequence ID" value="AAI26067.1"/>
    <property type="molecule type" value="mRNA"/>
</dbReference>
<dbReference type="EMBL" id="M28255">
    <property type="protein sequence ID" value="AAA41018.1"/>
    <property type="molecule type" value="mRNA"/>
</dbReference>
<dbReference type="EMBL" id="X06146">
    <property type="protein sequence ID" value="CAA29505.1"/>
    <property type="molecule type" value="mRNA"/>
</dbReference>
<dbReference type="PIR" id="S00115">
    <property type="entry name" value="S00115"/>
</dbReference>
<dbReference type="PIR" id="S65392">
    <property type="entry name" value="S65392"/>
</dbReference>
<dbReference type="RefSeq" id="NP_599172.1">
    <property type="nucleotide sequence ID" value="NM_134345.1"/>
</dbReference>
<dbReference type="SMR" id="P80433"/>
<dbReference type="CORUM" id="P80433"/>
<dbReference type="FunCoup" id="P80433">
    <property type="interactions" value="379"/>
</dbReference>
<dbReference type="STRING" id="10116.ENSRNOP00000028754"/>
<dbReference type="PhosphoSitePlus" id="P80433"/>
<dbReference type="PaxDb" id="10116-ENSRNOP00000028754"/>
<dbReference type="GeneID" id="171335"/>
<dbReference type="KEGG" id="rno:171335"/>
<dbReference type="UCSC" id="RGD:620638">
    <property type="organism name" value="rat"/>
</dbReference>
<dbReference type="AGR" id="RGD:620638"/>
<dbReference type="CTD" id="1351"/>
<dbReference type="RGD" id="620638">
    <property type="gene designation" value="Cox8a"/>
</dbReference>
<dbReference type="eggNOG" id="ENOG502SA62">
    <property type="taxonomic scope" value="Eukaryota"/>
</dbReference>
<dbReference type="HOGENOM" id="CLU_203368_0_0_1"/>
<dbReference type="InParanoid" id="P80433"/>
<dbReference type="OrthoDB" id="8931496at2759"/>
<dbReference type="Reactome" id="R-RNO-5628897">
    <property type="pathway name" value="TP53 Regulates Metabolic Genes"/>
</dbReference>
<dbReference type="Reactome" id="R-RNO-611105">
    <property type="pathway name" value="Respiratory electron transport"/>
</dbReference>
<dbReference type="Reactome" id="R-RNO-9707564">
    <property type="pathway name" value="Cytoprotection by HMOX1"/>
</dbReference>
<dbReference type="Reactome" id="R-RNO-9864848">
    <property type="pathway name" value="Complex IV assembly"/>
</dbReference>
<dbReference type="UniPathway" id="UPA00705"/>
<dbReference type="PRO" id="PR:P80433"/>
<dbReference type="Proteomes" id="UP000002494">
    <property type="component" value="Chromosome 1"/>
</dbReference>
<dbReference type="Bgee" id="ENSRNOG00000021177">
    <property type="expression patterns" value="Expressed in kidney and 20 other cell types or tissues"/>
</dbReference>
<dbReference type="GO" id="GO:0005743">
    <property type="term" value="C:mitochondrial inner membrane"/>
    <property type="evidence" value="ECO:0007669"/>
    <property type="project" value="UniProtKB-SubCell"/>
</dbReference>
<dbReference type="GO" id="GO:0031966">
    <property type="term" value="C:mitochondrial membrane"/>
    <property type="evidence" value="ECO:0000266"/>
    <property type="project" value="RGD"/>
</dbReference>
<dbReference type="GO" id="GO:0005739">
    <property type="term" value="C:mitochondrion"/>
    <property type="evidence" value="ECO:0000318"/>
    <property type="project" value="GO_Central"/>
</dbReference>
<dbReference type="GO" id="GO:0045277">
    <property type="term" value="C:respiratory chain complex IV"/>
    <property type="evidence" value="ECO:0000318"/>
    <property type="project" value="GO_Central"/>
</dbReference>
<dbReference type="GO" id="GO:0006123">
    <property type="term" value="P:mitochondrial electron transport, cytochrome c to oxygen"/>
    <property type="evidence" value="ECO:0007669"/>
    <property type="project" value="InterPro"/>
</dbReference>
<dbReference type="CDD" id="cd00930">
    <property type="entry name" value="Cyt_c_Oxidase_VIII"/>
    <property type="match status" value="1"/>
</dbReference>
<dbReference type="FunFam" id="4.10.81.10:FF:000001">
    <property type="entry name" value="Cytochrome c oxidase subunit 8B, mitochondrial"/>
    <property type="match status" value="1"/>
</dbReference>
<dbReference type="Gene3D" id="4.10.81.10">
    <property type="entry name" value="Cytochrome c oxidase, subunit 8"/>
    <property type="match status" value="1"/>
</dbReference>
<dbReference type="InterPro" id="IPR003205">
    <property type="entry name" value="Cyt_c_oxidase_su8"/>
</dbReference>
<dbReference type="InterPro" id="IPR036548">
    <property type="entry name" value="Cyt_c_oxidase_su8_sf"/>
</dbReference>
<dbReference type="PANTHER" id="PTHR16717">
    <property type="entry name" value="CYTOCHROME C OXIDASE POLYPEPTIDE VIII"/>
    <property type="match status" value="1"/>
</dbReference>
<dbReference type="PANTHER" id="PTHR16717:SF1">
    <property type="entry name" value="CYTOCHROME C OXIDASE SUBUNIT 8A, MITOCHONDRIAL"/>
    <property type="match status" value="1"/>
</dbReference>
<dbReference type="Pfam" id="PF02285">
    <property type="entry name" value="COX8"/>
    <property type="match status" value="1"/>
</dbReference>
<dbReference type="SUPFAM" id="SSF81431">
    <property type="entry name" value="Mitochondrial cytochrome c oxidase subunit VIIIb (aka IX)"/>
    <property type="match status" value="1"/>
</dbReference>
<comment type="function">
    <text evidence="1">Component of the cytochrome c oxidase, the last enzyme in the mitochondrial electron transport chain which drives oxidative phosphorylation. The respiratory chain contains 3 multisubunit complexes succinate dehydrogenase (complex II, CII), ubiquinol-cytochrome c oxidoreductase (cytochrome b-c1 complex, complex III, CIII) and cytochrome c oxidase (complex IV, CIV), that cooperate to transfer electrons derived from NADH and succinate to molecular oxygen, creating an electrochemical gradient over the inner membrane that drives transmembrane transport and the ATP synthase. Cytochrome c oxidase is the component of the respiratory chain that catalyzes the reduction of oxygen to water. Electrons originating from reduced cytochrome c in the intermembrane space (IMS) are transferred via the dinuclear copper A center (CU(A)) of subunit 2 and heme A of subunit 1 to the active site in subunit 1, a binuclear center (BNC) formed by heme A3 and copper B (CU(B)). The BNC reduces molecular oxygen to 2 water molecules using 4 electrons from cytochrome c in the IMS and 4 protons from the mitochondrial matrix.</text>
</comment>
<comment type="pathway">
    <text evidence="1">Energy metabolism; oxidative phosphorylation.</text>
</comment>
<comment type="subunit">
    <text evidence="2">Component of the cytochrome c oxidase (complex IV, CIV), a multisubunit enzyme composed of 14 subunits. The complex is composed of a catalytic core of 3 subunits MT-CO1, MT-CO2 and MT-CO3, encoded in the mitochondrial DNA, and 11 supernumerary subunits COX4I, COX5A, COX5B, COX6A, COX6B, COX6C, COX7A, COX7B, COX7C, COX8 and NDUFA4, which are encoded in the nuclear genome. The complex exists as a monomer or a dimer and forms supercomplexes (SCs) in the inner mitochondrial membrane with NADH-ubiquinone oxidoreductase (complex I, CI) and ubiquinol-cytochrome c oxidoreductase (cytochrome b-c1 complex, complex III, CIII), resulting in different assemblies (supercomplex SCI(1)III(2)IV(1) and megacomplex MCI(2)III(2)IV(2)).</text>
</comment>
<comment type="subcellular location">
    <subcellularLocation>
        <location evidence="2">Mitochondrion inner membrane</location>
        <topology evidence="2">Single-pass membrane protein</topology>
    </subcellularLocation>
</comment>
<comment type="PTM">
    <text evidence="2">In response to mitochondrial stress, the precursor protein is ubiquitinated by the SIFI complex in the cytoplasm before mitochondrial import, leading to its degradation. Within the SIFI complex, UBR4 initiates ubiquitin chain that are further elongated or branched by KCMF1.</text>
</comment>
<comment type="similarity">
    <text evidence="4">Belongs to the cytochrome c oxidase VIII family.</text>
</comment>